<accession>Q5MZ26</accession>
<dbReference type="EC" id="1.1.1.23" evidence="1"/>
<dbReference type="EMBL" id="AP008231">
    <property type="protein sequence ID" value="BAD80694.1"/>
    <property type="molecule type" value="Genomic_DNA"/>
</dbReference>
<dbReference type="RefSeq" id="WP_011244814.1">
    <property type="nucleotide sequence ID" value="NZ_CP085785.1"/>
</dbReference>
<dbReference type="SMR" id="Q5MZ26"/>
<dbReference type="GeneID" id="72430446"/>
<dbReference type="KEGG" id="syc:syc2504_c"/>
<dbReference type="eggNOG" id="COG0141">
    <property type="taxonomic scope" value="Bacteria"/>
</dbReference>
<dbReference type="UniPathway" id="UPA00031">
    <property type="reaction ID" value="UER00014"/>
</dbReference>
<dbReference type="Proteomes" id="UP000001175">
    <property type="component" value="Chromosome"/>
</dbReference>
<dbReference type="GO" id="GO:0005829">
    <property type="term" value="C:cytosol"/>
    <property type="evidence" value="ECO:0007669"/>
    <property type="project" value="TreeGrafter"/>
</dbReference>
<dbReference type="GO" id="GO:0004399">
    <property type="term" value="F:histidinol dehydrogenase activity"/>
    <property type="evidence" value="ECO:0007669"/>
    <property type="project" value="UniProtKB-UniRule"/>
</dbReference>
<dbReference type="GO" id="GO:0051287">
    <property type="term" value="F:NAD binding"/>
    <property type="evidence" value="ECO:0007669"/>
    <property type="project" value="InterPro"/>
</dbReference>
<dbReference type="GO" id="GO:0008270">
    <property type="term" value="F:zinc ion binding"/>
    <property type="evidence" value="ECO:0007669"/>
    <property type="project" value="UniProtKB-UniRule"/>
</dbReference>
<dbReference type="GO" id="GO:0000105">
    <property type="term" value="P:L-histidine biosynthetic process"/>
    <property type="evidence" value="ECO:0007669"/>
    <property type="project" value="UniProtKB-UniRule"/>
</dbReference>
<dbReference type="CDD" id="cd06572">
    <property type="entry name" value="Histidinol_dh"/>
    <property type="match status" value="1"/>
</dbReference>
<dbReference type="FunFam" id="3.40.50.1980:FF:000001">
    <property type="entry name" value="Histidinol dehydrogenase"/>
    <property type="match status" value="1"/>
</dbReference>
<dbReference type="FunFam" id="3.40.50.1980:FF:000026">
    <property type="entry name" value="Histidinol dehydrogenase"/>
    <property type="match status" value="1"/>
</dbReference>
<dbReference type="Gene3D" id="1.20.5.1300">
    <property type="match status" value="1"/>
</dbReference>
<dbReference type="Gene3D" id="3.40.50.1980">
    <property type="entry name" value="Nitrogenase molybdenum iron protein domain"/>
    <property type="match status" value="2"/>
</dbReference>
<dbReference type="HAMAP" id="MF_01024">
    <property type="entry name" value="HisD"/>
    <property type="match status" value="1"/>
</dbReference>
<dbReference type="InterPro" id="IPR016161">
    <property type="entry name" value="Ald_DH/histidinol_DH"/>
</dbReference>
<dbReference type="InterPro" id="IPR001692">
    <property type="entry name" value="Histidinol_DH_CS"/>
</dbReference>
<dbReference type="InterPro" id="IPR022695">
    <property type="entry name" value="Histidinol_DH_monofunct"/>
</dbReference>
<dbReference type="InterPro" id="IPR012131">
    <property type="entry name" value="Hstdl_DH"/>
</dbReference>
<dbReference type="NCBIfam" id="TIGR00069">
    <property type="entry name" value="hisD"/>
    <property type="match status" value="1"/>
</dbReference>
<dbReference type="PANTHER" id="PTHR21256:SF2">
    <property type="entry name" value="HISTIDINE BIOSYNTHESIS TRIFUNCTIONAL PROTEIN"/>
    <property type="match status" value="1"/>
</dbReference>
<dbReference type="PANTHER" id="PTHR21256">
    <property type="entry name" value="HISTIDINOL DEHYDROGENASE HDH"/>
    <property type="match status" value="1"/>
</dbReference>
<dbReference type="Pfam" id="PF00815">
    <property type="entry name" value="Histidinol_dh"/>
    <property type="match status" value="1"/>
</dbReference>
<dbReference type="PIRSF" id="PIRSF000099">
    <property type="entry name" value="Histidinol_dh"/>
    <property type="match status" value="1"/>
</dbReference>
<dbReference type="PRINTS" id="PR00083">
    <property type="entry name" value="HOLDHDRGNASE"/>
</dbReference>
<dbReference type="SUPFAM" id="SSF53720">
    <property type="entry name" value="ALDH-like"/>
    <property type="match status" value="1"/>
</dbReference>
<dbReference type="PROSITE" id="PS00611">
    <property type="entry name" value="HISOL_DEHYDROGENASE"/>
    <property type="match status" value="1"/>
</dbReference>
<organism>
    <name type="scientific">Synechococcus sp. (strain ATCC 27144 / PCC 6301 / SAUG 1402/1)</name>
    <name type="common">Anacystis nidulans</name>
    <dbReference type="NCBI Taxonomy" id="269084"/>
    <lineage>
        <taxon>Bacteria</taxon>
        <taxon>Bacillati</taxon>
        <taxon>Cyanobacteriota</taxon>
        <taxon>Cyanophyceae</taxon>
        <taxon>Synechococcales</taxon>
        <taxon>Synechococcaceae</taxon>
        <taxon>Synechococcus</taxon>
    </lineage>
</organism>
<gene>
    <name evidence="1" type="primary">hisD</name>
    <name type="ordered locus">syc2504_c</name>
</gene>
<sequence length="434" mass="46652">MLRIVSHLAEAQAELERICDRTHDDAVVHREASVREIVQAVQRRGDAALIEFTQEFDGFALQAENLRVSGAELDAAYQQIPKELLDAIRLAHHQIEAFHRQRVPKSWVQFGADGEVLGKRYTPVDRAGLYVPGGRAAYPSTVLMNAVPAKVAGVERVVITTPPGPDGSLNPAVLVAAQEAGIEEIYRVGGAQAIAALAYGTATIPKVDVISGPGNIYVTLAKKLVYGTVGIDSLAGPSEVLIIADRSANPRWVAADLLAQAEHDPLAAAILITPDLELATQVGFEVERQLQDHPRRLVTEKAIAHYGLAIVVDSLETAVKLSNQFAPEHLELEVEDPWALVEQVRHAGAIFLGSLTPEAIGDYVAGPNHTLPTSGAARYASALSVETFLKSSSLIEYTAASLQRVARAVDVLATAEGLESHAESVRLRQQSLDR</sequence>
<evidence type="ECO:0000255" key="1">
    <source>
        <dbReference type="HAMAP-Rule" id="MF_01024"/>
    </source>
</evidence>
<proteinExistence type="inferred from homology"/>
<feature type="chain" id="PRO_0000135863" description="Histidinol dehydrogenase">
    <location>
        <begin position="1"/>
        <end position="434"/>
    </location>
</feature>
<feature type="active site" description="Proton acceptor" evidence="1">
    <location>
        <position position="328"/>
    </location>
</feature>
<feature type="active site" description="Proton acceptor" evidence="1">
    <location>
        <position position="329"/>
    </location>
</feature>
<feature type="binding site" evidence="1">
    <location>
        <position position="130"/>
    </location>
    <ligand>
        <name>NAD(+)</name>
        <dbReference type="ChEBI" id="CHEBI:57540"/>
    </ligand>
</feature>
<feature type="binding site" evidence="1">
    <location>
        <position position="192"/>
    </location>
    <ligand>
        <name>NAD(+)</name>
        <dbReference type="ChEBI" id="CHEBI:57540"/>
    </ligand>
</feature>
<feature type="binding site" evidence="1">
    <location>
        <position position="215"/>
    </location>
    <ligand>
        <name>NAD(+)</name>
        <dbReference type="ChEBI" id="CHEBI:57540"/>
    </ligand>
</feature>
<feature type="binding site" evidence="1">
    <location>
        <position position="238"/>
    </location>
    <ligand>
        <name>substrate</name>
    </ligand>
</feature>
<feature type="binding site" evidence="1">
    <location>
        <position position="260"/>
    </location>
    <ligand>
        <name>substrate</name>
    </ligand>
</feature>
<feature type="binding site" evidence="1">
    <location>
        <position position="260"/>
    </location>
    <ligand>
        <name>Zn(2+)</name>
        <dbReference type="ChEBI" id="CHEBI:29105"/>
    </ligand>
</feature>
<feature type="binding site" evidence="1">
    <location>
        <position position="263"/>
    </location>
    <ligand>
        <name>substrate</name>
    </ligand>
</feature>
<feature type="binding site" evidence="1">
    <location>
        <position position="263"/>
    </location>
    <ligand>
        <name>Zn(2+)</name>
        <dbReference type="ChEBI" id="CHEBI:29105"/>
    </ligand>
</feature>
<feature type="binding site" evidence="1">
    <location>
        <position position="329"/>
    </location>
    <ligand>
        <name>substrate</name>
    </ligand>
</feature>
<feature type="binding site" evidence="1">
    <location>
        <position position="362"/>
    </location>
    <ligand>
        <name>substrate</name>
    </ligand>
</feature>
<feature type="binding site" evidence="1">
    <location>
        <position position="362"/>
    </location>
    <ligand>
        <name>Zn(2+)</name>
        <dbReference type="ChEBI" id="CHEBI:29105"/>
    </ligand>
</feature>
<feature type="binding site" evidence="1">
    <location>
        <position position="416"/>
    </location>
    <ligand>
        <name>substrate</name>
    </ligand>
</feature>
<feature type="binding site" evidence="1">
    <location>
        <position position="421"/>
    </location>
    <ligand>
        <name>substrate</name>
    </ligand>
</feature>
<feature type="binding site" evidence="1">
    <location>
        <position position="421"/>
    </location>
    <ligand>
        <name>Zn(2+)</name>
        <dbReference type="ChEBI" id="CHEBI:29105"/>
    </ligand>
</feature>
<protein>
    <recommendedName>
        <fullName evidence="1">Histidinol dehydrogenase</fullName>
        <shortName evidence="1">HDH</shortName>
        <ecNumber evidence="1">1.1.1.23</ecNumber>
    </recommendedName>
</protein>
<name>HISX_SYNP6</name>
<reference key="1">
    <citation type="journal article" date="2007" name="Photosyn. Res.">
        <title>Complete nucleotide sequence of the freshwater unicellular cyanobacterium Synechococcus elongatus PCC 6301 chromosome: gene content and organization.</title>
        <authorList>
            <person name="Sugita C."/>
            <person name="Ogata K."/>
            <person name="Shikata M."/>
            <person name="Jikuya H."/>
            <person name="Takano J."/>
            <person name="Furumichi M."/>
            <person name="Kanehisa M."/>
            <person name="Omata T."/>
            <person name="Sugiura M."/>
            <person name="Sugita M."/>
        </authorList>
    </citation>
    <scope>NUCLEOTIDE SEQUENCE [LARGE SCALE GENOMIC DNA]</scope>
    <source>
        <strain>ATCC 27144 / PCC 6301 / SAUG 1402/1</strain>
    </source>
</reference>
<keyword id="KW-0028">Amino-acid biosynthesis</keyword>
<keyword id="KW-0368">Histidine biosynthesis</keyword>
<keyword id="KW-0479">Metal-binding</keyword>
<keyword id="KW-0520">NAD</keyword>
<keyword id="KW-0560">Oxidoreductase</keyword>
<keyword id="KW-0862">Zinc</keyword>
<comment type="function">
    <text evidence="1">Catalyzes the sequential NAD-dependent oxidations of L-histidinol to L-histidinaldehyde and then to L-histidine.</text>
</comment>
<comment type="catalytic activity">
    <reaction evidence="1">
        <text>L-histidinol + 2 NAD(+) + H2O = L-histidine + 2 NADH + 3 H(+)</text>
        <dbReference type="Rhea" id="RHEA:20641"/>
        <dbReference type="ChEBI" id="CHEBI:15377"/>
        <dbReference type="ChEBI" id="CHEBI:15378"/>
        <dbReference type="ChEBI" id="CHEBI:57540"/>
        <dbReference type="ChEBI" id="CHEBI:57595"/>
        <dbReference type="ChEBI" id="CHEBI:57699"/>
        <dbReference type="ChEBI" id="CHEBI:57945"/>
        <dbReference type="EC" id="1.1.1.23"/>
    </reaction>
</comment>
<comment type="cofactor">
    <cofactor evidence="1">
        <name>Zn(2+)</name>
        <dbReference type="ChEBI" id="CHEBI:29105"/>
    </cofactor>
    <text evidence="1">Binds 1 zinc ion per subunit.</text>
</comment>
<comment type="pathway">
    <text evidence="1">Amino-acid biosynthesis; L-histidine biosynthesis; L-histidine from 5-phospho-alpha-D-ribose 1-diphosphate: step 9/9.</text>
</comment>
<comment type="similarity">
    <text evidence="1">Belongs to the histidinol dehydrogenase family.</text>
</comment>